<accession>Q5YS64</accession>
<reference key="1">
    <citation type="journal article" date="2004" name="Proc. Natl. Acad. Sci. U.S.A.">
        <title>The complete genomic sequence of Nocardia farcinica IFM 10152.</title>
        <authorList>
            <person name="Ishikawa J."/>
            <person name="Yamashita A."/>
            <person name="Mikami Y."/>
            <person name="Hoshino Y."/>
            <person name="Kurita H."/>
            <person name="Hotta K."/>
            <person name="Shiba T."/>
            <person name="Hattori M."/>
        </authorList>
    </citation>
    <scope>NUCLEOTIDE SEQUENCE [LARGE SCALE GENOMIC DNA]</scope>
    <source>
        <strain>IFM 10152</strain>
    </source>
</reference>
<name>RRF_NOCFA</name>
<proteinExistence type="inferred from homology"/>
<protein>
    <recommendedName>
        <fullName evidence="1">Ribosome-recycling factor</fullName>
        <shortName evidence="1">RRF</shortName>
    </recommendedName>
    <alternativeName>
        <fullName evidence="1">Ribosome-releasing factor</fullName>
    </alternativeName>
</protein>
<organism>
    <name type="scientific">Nocardia farcinica (strain IFM 10152)</name>
    <dbReference type="NCBI Taxonomy" id="247156"/>
    <lineage>
        <taxon>Bacteria</taxon>
        <taxon>Bacillati</taxon>
        <taxon>Actinomycetota</taxon>
        <taxon>Actinomycetes</taxon>
        <taxon>Mycobacteriales</taxon>
        <taxon>Nocardiaceae</taxon>
        <taxon>Nocardia</taxon>
    </lineage>
</organism>
<comment type="function">
    <text evidence="1">Responsible for the release of ribosomes from messenger RNA at the termination of protein biosynthesis. May increase the efficiency of translation by recycling ribosomes from one round of translation to another.</text>
</comment>
<comment type="subcellular location">
    <subcellularLocation>
        <location evidence="1">Cytoplasm</location>
    </subcellularLocation>
</comment>
<comment type="similarity">
    <text evidence="1">Belongs to the RRF family.</text>
</comment>
<gene>
    <name evidence="1" type="primary">frr</name>
    <name type="ordered locus">NFA_41280</name>
</gene>
<sequence>MIEEALFDAEEKMEKAVSVAKDDLGTIRTGRANPGMFARVVVDYYGSPTPVTQMSSITVPEPRMVVIKPYEAGQLGAIETAIRNSDLGVNPTNNGDILRITIPQLTEERRRELVKQAKGKGEDAKVAIRNVRRKAMDELARIQKDGEAGEDEVGRAEKELDKTTAKYVSQIDELVKHKEAELLEV</sequence>
<dbReference type="EMBL" id="AP006618">
    <property type="protein sequence ID" value="BAD58977.1"/>
    <property type="molecule type" value="Genomic_DNA"/>
</dbReference>
<dbReference type="RefSeq" id="WP_011210662.1">
    <property type="nucleotide sequence ID" value="NC_006361.1"/>
</dbReference>
<dbReference type="SMR" id="Q5YS64"/>
<dbReference type="STRING" id="247156.NFA_41280"/>
<dbReference type="GeneID" id="61134768"/>
<dbReference type="KEGG" id="nfa:NFA_41280"/>
<dbReference type="eggNOG" id="COG0233">
    <property type="taxonomic scope" value="Bacteria"/>
</dbReference>
<dbReference type="HOGENOM" id="CLU_073981_2_0_11"/>
<dbReference type="OrthoDB" id="9804006at2"/>
<dbReference type="Proteomes" id="UP000006820">
    <property type="component" value="Chromosome"/>
</dbReference>
<dbReference type="GO" id="GO:0005737">
    <property type="term" value="C:cytoplasm"/>
    <property type="evidence" value="ECO:0007669"/>
    <property type="project" value="UniProtKB-SubCell"/>
</dbReference>
<dbReference type="GO" id="GO:0043023">
    <property type="term" value="F:ribosomal large subunit binding"/>
    <property type="evidence" value="ECO:0007669"/>
    <property type="project" value="TreeGrafter"/>
</dbReference>
<dbReference type="GO" id="GO:0006415">
    <property type="term" value="P:translational termination"/>
    <property type="evidence" value="ECO:0007669"/>
    <property type="project" value="UniProtKB-UniRule"/>
</dbReference>
<dbReference type="CDD" id="cd00520">
    <property type="entry name" value="RRF"/>
    <property type="match status" value="1"/>
</dbReference>
<dbReference type="FunFam" id="1.10.132.20:FF:000001">
    <property type="entry name" value="Ribosome-recycling factor"/>
    <property type="match status" value="1"/>
</dbReference>
<dbReference type="FunFam" id="3.30.1360.40:FF:000001">
    <property type="entry name" value="Ribosome-recycling factor"/>
    <property type="match status" value="1"/>
</dbReference>
<dbReference type="Gene3D" id="3.30.1360.40">
    <property type="match status" value="1"/>
</dbReference>
<dbReference type="Gene3D" id="1.10.132.20">
    <property type="entry name" value="Ribosome-recycling factor"/>
    <property type="match status" value="1"/>
</dbReference>
<dbReference type="HAMAP" id="MF_00040">
    <property type="entry name" value="RRF"/>
    <property type="match status" value="1"/>
</dbReference>
<dbReference type="InterPro" id="IPR002661">
    <property type="entry name" value="Ribosome_recyc_fac"/>
</dbReference>
<dbReference type="InterPro" id="IPR023584">
    <property type="entry name" value="Ribosome_recyc_fac_dom"/>
</dbReference>
<dbReference type="InterPro" id="IPR036191">
    <property type="entry name" value="RRF_sf"/>
</dbReference>
<dbReference type="NCBIfam" id="TIGR00496">
    <property type="entry name" value="frr"/>
    <property type="match status" value="1"/>
</dbReference>
<dbReference type="PANTHER" id="PTHR20982:SF3">
    <property type="entry name" value="MITOCHONDRIAL RIBOSOME RECYCLING FACTOR PSEUDO 1"/>
    <property type="match status" value="1"/>
</dbReference>
<dbReference type="PANTHER" id="PTHR20982">
    <property type="entry name" value="RIBOSOME RECYCLING FACTOR"/>
    <property type="match status" value="1"/>
</dbReference>
<dbReference type="Pfam" id="PF01765">
    <property type="entry name" value="RRF"/>
    <property type="match status" value="1"/>
</dbReference>
<dbReference type="SUPFAM" id="SSF55194">
    <property type="entry name" value="Ribosome recycling factor, RRF"/>
    <property type="match status" value="1"/>
</dbReference>
<keyword id="KW-0963">Cytoplasm</keyword>
<keyword id="KW-0648">Protein biosynthesis</keyword>
<keyword id="KW-1185">Reference proteome</keyword>
<feature type="chain" id="PRO_0000167505" description="Ribosome-recycling factor">
    <location>
        <begin position="1"/>
        <end position="185"/>
    </location>
</feature>
<evidence type="ECO:0000255" key="1">
    <source>
        <dbReference type="HAMAP-Rule" id="MF_00040"/>
    </source>
</evidence>